<comment type="function">
    <text evidence="7 8">Inhibits fibroblast growth factor (FGF)-induced retinal lens fiber differentiation, probably by inhibiting FGF-mediated phosphorylation of ERK1/2 (PubMed:29501879). Inhibits TGFB-induced epithelial-to-mesenchymal transition in lens epithelial cells (PubMed:25576668).</text>
</comment>
<comment type="subunit">
    <text evidence="5 6">Forms heterodimers with SPRY2 (PubMed:16877379). Interacts with TESK1 (PubMed:17974561). Interacts with CAV1 (via C-terminus) (PubMed:16877379).</text>
</comment>
<comment type="subcellular location">
    <subcellularLocation>
        <location>Cytoplasm</location>
    </subcellularLocation>
    <subcellularLocation>
        <location>Membrane</location>
        <topology>Peripheral membrane protein</topology>
    </subcellularLocation>
    <text>Found in the cytoplasm in unstimulated cells but is translocated to the membrane ruffles in cells stimulated with EGF (epidermal growth factor).</text>
</comment>
<comment type="developmental stage">
    <text evidence="4">At 8.5 dpc, expressed in the primitive streak, rostral forebrain, cells lateral to the posterior hindbrain, anterior hindbrain and developing midbrain (PubMed:10498682). At 9.5 dpc, continues to be expressed in the rostral forebrain and primitive streak, and is also detected in the branchial arches and the forelimb bud (PubMed:10498682). At 10.5 dpc, expressed in the somites, frontonasal processes, tailbud, and hindlimb bud (PubMed:10498682).</text>
</comment>
<comment type="domain">
    <text>The Cys-rich domain is responsible for the localization of the protein to the membrane ruffles.</text>
</comment>
<comment type="similarity">
    <text evidence="9">Belongs to the sprouty family.</text>
</comment>
<dbReference type="EMBL" id="AF176903">
    <property type="protein sequence ID" value="AAD56004.1"/>
    <property type="molecule type" value="mRNA"/>
</dbReference>
<dbReference type="EMBL" id="BC053428">
    <property type="protein sequence ID" value="AAH53428.1"/>
    <property type="molecule type" value="mRNA"/>
</dbReference>
<dbReference type="EMBL" id="BC069914">
    <property type="protein sequence ID" value="AAH69914.1"/>
    <property type="molecule type" value="mRNA"/>
</dbReference>
<dbReference type="CCDS" id="CCDS17322.1"/>
<dbReference type="RefSeq" id="NP_001292369.1">
    <property type="nucleotide sequence ID" value="NM_001305440.1"/>
</dbReference>
<dbReference type="RefSeq" id="NP_001292370.1">
    <property type="nucleotide sequence ID" value="NM_001305441.1"/>
</dbReference>
<dbReference type="RefSeq" id="NP_001292371.1">
    <property type="nucleotide sequence ID" value="NM_001305442.1"/>
</dbReference>
<dbReference type="RefSeq" id="NP_036026.1">
    <property type="nucleotide sequence ID" value="NM_011896.3"/>
</dbReference>
<dbReference type="SMR" id="Q9QXV9"/>
<dbReference type="BioGRID" id="204876">
    <property type="interactions" value="7"/>
</dbReference>
<dbReference type="FunCoup" id="Q9QXV9">
    <property type="interactions" value="1511"/>
</dbReference>
<dbReference type="STRING" id="10090.ENSMUSP00000103742"/>
<dbReference type="iPTMnet" id="Q9QXV9"/>
<dbReference type="PhosphoSitePlus" id="Q9QXV9"/>
<dbReference type="jPOST" id="Q9QXV9"/>
<dbReference type="PaxDb" id="10090-ENSMUSP00000049292"/>
<dbReference type="ProteomicsDB" id="257064"/>
<dbReference type="Pumba" id="Q9QXV9"/>
<dbReference type="Antibodypedia" id="26880">
    <property type="antibodies" value="271 antibodies from 30 providers"/>
</dbReference>
<dbReference type="DNASU" id="24063"/>
<dbReference type="Ensembl" id="ENSMUST00000038569.8">
    <property type="protein sequence ID" value="ENSMUSP00000049292.2"/>
    <property type="gene ID" value="ENSMUSG00000037211.13"/>
</dbReference>
<dbReference type="Ensembl" id="ENSMUST00000108107.2">
    <property type="protein sequence ID" value="ENSMUSP00000103742.2"/>
    <property type="gene ID" value="ENSMUSG00000037211.13"/>
</dbReference>
<dbReference type="Ensembl" id="ENSMUST00000108109.8">
    <property type="protein sequence ID" value="ENSMUSP00000103744.2"/>
    <property type="gene ID" value="ENSMUSG00000037211.13"/>
</dbReference>
<dbReference type="GeneID" id="24063"/>
<dbReference type="KEGG" id="mmu:24063"/>
<dbReference type="UCSC" id="uc008pax.2">
    <property type="organism name" value="mouse"/>
</dbReference>
<dbReference type="AGR" id="MGI:1345139"/>
<dbReference type="CTD" id="10252"/>
<dbReference type="MGI" id="MGI:1345139">
    <property type="gene designation" value="Spry1"/>
</dbReference>
<dbReference type="VEuPathDB" id="HostDB:ENSMUSG00000037211"/>
<dbReference type="eggNOG" id="ENOG502QSDN">
    <property type="taxonomic scope" value="Eukaryota"/>
</dbReference>
<dbReference type="GeneTree" id="ENSGT00950000183055"/>
<dbReference type="HOGENOM" id="CLU_077696_0_0_1"/>
<dbReference type="InParanoid" id="Q9QXV9"/>
<dbReference type="OMA" id="YERESQP"/>
<dbReference type="OrthoDB" id="10038884at2759"/>
<dbReference type="PhylomeDB" id="Q9QXV9"/>
<dbReference type="TreeFam" id="TF325070"/>
<dbReference type="Reactome" id="R-MMU-182971">
    <property type="pathway name" value="EGFR downregulation"/>
</dbReference>
<dbReference type="BioGRID-ORCS" id="24063">
    <property type="hits" value="0 hits in 62 CRISPR screens"/>
</dbReference>
<dbReference type="PRO" id="PR:Q9QXV9"/>
<dbReference type="Proteomes" id="UP000000589">
    <property type="component" value="Chromosome 3"/>
</dbReference>
<dbReference type="RNAct" id="Q9QXV9">
    <property type="molecule type" value="protein"/>
</dbReference>
<dbReference type="Bgee" id="ENSMUSG00000037211">
    <property type="expression patterns" value="Expressed in secondary oocyte and 109 other cell types or tissues"/>
</dbReference>
<dbReference type="ExpressionAtlas" id="Q9QXV9">
    <property type="expression patterns" value="baseline and differential"/>
</dbReference>
<dbReference type="GO" id="GO:0005829">
    <property type="term" value="C:cytosol"/>
    <property type="evidence" value="ECO:0007669"/>
    <property type="project" value="Ensembl"/>
</dbReference>
<dbReference type="GO" id="GO:0005794">
    <property type="term" value="C:Golgi apparatus"/>
    <property type="evidence" value="ECO:0007669"/>
    <property type="project" value="Ensembl"/>
</dbReference>
<dbReference type="GO" id="GO:0016020">
    <property type="term" value="C:membrane"/>
    <property type="evidence" value="ECO:0007669"/>
    <property type="project" value="UniProtKB-SubCell"/>
</dbReference>
<dbReference type="GO" id="GO:0005654">
    <property type="term" value="C:nucleoplasm"/>
    <property type="evidence" value="ECO:0007669"/>
    <property type="project" value="Ensembl"/>
</dbReference>
<dbReference type="GO" id="GO:0060449">
    <property type="term" value="P:bud elongation involved in lung branching"/>
    <property type="evidence" value="ECO:0000316"/>
    <property type="project" value="MGI"/>
</dbReference>
<dbReference type="GO" id="GO:0060940">
    <property type="term" value="P:epithelial to mesenchymal transition involved in cardiac fibroblast development"/>
    <property type="evidence" value="ECO:0007669"/>
    <property type="project" value="Ensembl"/>
</dbReference>
<dbReference type="GO" id="GO:0070371">
    <property type="term" value="P:ERK1 and ERK2 cascade"/>
    <property type="evidence" value="ECO:0000316"/>
    <property type="project" value="MGI"/>
</dbReference>
<dbReference type="GO" id="GO:0000132">
    <property type="term" value="P:establishment of mitotic spindle orientation"/>
    <property type="evidence" value="ECO:0000316"/>
    <property type="project" value="MGI"/>
</dbReference>
<dbReference type="GO" id="GO:0001656">
    <property type="term" value="P:metanephros development"/>
    <property type="evidence" value="ECO:0000316"/>
    <property type="project" value="MGI"/>
</dbReference>
<dbReference type="GO" id="GO:0008285">
    <property type="term" value="P:negative regulation of cell population proliferation"/>
    <property type="evidence" value="ECO:0000314"/>
    <property type="project" value="MGI"/>
</dbReference>
<dbReference type="GO" id="GO:0010719">
    <property type="term" value="P:negative regulation of epithelial to mesenchymal transition"/>
    <property type="evidence" value="ECO:0000314"/>
    <property type="project" value="UniProtKB"/>
</dbReference>
<dbReference type="GO" id="GO:0070373">
    <property type="term" value="P:negative regulation of ERK1 and ERK2 cascade"/>
    <property type="evidence" value="ECO:0000314"/>
    <property type="project" value="UniProtKB"/>
</dbReference>
<dbReference type="GO" id="GO:0040037">
    <property type="term" value="P:negative regulation of fibroblast growth factor receptor signaling pathway"/>
    <property type="evidence" value="ECO:0000314"/>
    <property type="project" value="MGI"/>
</dbReference>
<dbReference type="GO" id="GO:1902747">
    <property type="term" value="P:negative regulation of lens fiber cell differentiation"/>
    <property type="evidence" value="ECO:0000314"/>
    <property type="project" value="UniProtKB"/>
</dbReference>
<dbReference type="GO" id="GO:0051387">
    <property type="term" value="P:negative regulation of neurotrophin TRK receptor signaling pathway"/>
    <property type="evidence" value="ECO:0000314"/>
    <property type="project" value="MGI"/>
</dbReference>
<dbReference type="GO" id="GO:0046580">
    <property type="term" value="P:negative regulation of Ras protein signal transduction"/>
    <property type="evidence" value="ECO:0000314"/>
    <property type="project" value="MGI"/>
</dbReference>
<dbReference type="GO" id="GO:0030512">
    <property type="term" value="P:negative regulation of transforming growth factor beta receptor signaling pathway"/>
    <property type="evidence" value="ECO:0000314"/>
    <property type="project" value="UniProtKB"/>
</dbReference>
<dbReference type="GO" id="GO:0001759">
    <property type="term" value="P:organ induction"/>
    <property type="evidence" value="ECO:0000315"/>
    <property type="project" value="MGI"/>
</dbReference>
<dbReference type="GO" id="GO:0001657">
    <property type="term" value="P:ureteric bud development"/>
    <property type="evidence" value="ECO:0000315"/>
    <property type="project" value="MGI"/>
</dbReference>
<dbReference type="InterPro" id="IPR007875">
    <property type="entry name" value="Sprouty"/>
</dbReference>
<dbReference type="InterPro" id="IPR051192">
    <property type="entry name" value="Sprouty_domain"/>
</dbReference>
<dbReference type="PANTHER" id="PTHR12365:SF10">
    <property type="entry name" value="PROTEIN SPROUTY HOMOLOG 1"/>
    <property type="match status" value="1"/>
</dbReference>
<dbReference type="PANTHER" id="PTHR12365">
    <property type="entry name" value="SPROUTY"/>
    <property type="match status" value="1"/>
</dbReference>
<dbReference type="Pfam" id="PF05210">
    <property type="entry name" value="Sprouty"/>
    <property type="match status" value="1"/>
</dbReference>
<dbReference type="PROSITE" id="PS51227">
    <property type="entry name" value="SPR"/>
    <property type="match status" value="1"/>
</dbReference>
<name>SPY1_MOUSE</name>
<organism>
    <name type="scientific">Mus musculus</name>
    <name type="common">Mouse</name>
    <dbReference type="NCBI Taxonomy" id="10090"/>
    <lineage>
        <taxon>Eukaryota</taxon>
        <taxon>Metazoa</taxon>
        <taxon>Chordata</taxon>
        <taxon>Craniata</taxon>
        <taxon>Vertebrata</taxon>
        <taxon>Euteleostomi</taxon>
        <taxon>Mammalia</taxon>
        <taxon>Eutheria</taxon>
        <taxon>Euarchontoglires</taxon>
        <taxon>Glires</taxon>
        <taxon>Rodentia</taxon>
        <taxon>Myomorpha</taxon>
        <taxon>Muroidea</taxon>
        <taxon>Muridae</taxon>
        <taxon>Murinae</taxon>
        <taxon>Mus</taxon>
        <taxon>Mus</taxon>
    </lineage>
</organism>
<evidence type="ECO:0000250" key="1">
    <source>
        <dbReference type="UniProtKB" id="O43609"/>
    </source>
</evidence>
<evidence type="ECO:0000255" key="2">
    <source>
        <dbReference type="PROSITE-ProRule" id="PRU00572"/>
    </source>
</evidence>
<evidence type="ECO:0000256" key="3">
    <source>
        <dbReference type="SAM" id="MobiDB-lite"/>
    </source>
</evidence>
<evidence type="ECO:0000269" key="4">
    <source>
    </source>
</evidence>
<evidence type="ECO:0000269" key="5">
    <source>
    </source>
</evidence>
<evidence type="ECO:0000269" key="6">
    <source>
    </source>
</evidence>
<evidence type="ECO:0000269" key="7">
    <source>
    </source>
</evidence>
<evidence type="ECO:0000269" key="8">
    <source>
    </source>
</evidence>
<evidence type="ECO:0000305" key="9"/>
<proteinExistence type="evidence at protein level"/>
<protein>
    <recommendedName>
        <fullName>Protein sprouty homolog 1</fullName>
        <shortName>Spry-1</shortName>
    </recommendedName>
</protein>
<sequence>MDSPSQHGSHTSLVVIQPPAVEGRQRLDYDRDTQPATILSLDQIKAIRGSNEYTEGPSVARRPAPRTAPRPEKQERTHEIIPANVNSSYEHRPASHPGNARGSVLSRSTSTGSAASSGSSSSVSSEQGLLGRSPPTRPIPGHRSDRVIRTQPKQLLVEDLKASLKEDPTQHKFICEQCGKCKCGECTAPRALPSCLACDRQCLCSAESMVEYGTCMCLVKGIFYHCSNDDDGGSYSDNPCSCSQSHCCSRYLCMGALSLCLPCLLCYPPAKGCLKLCRGCYDWTHRPGCRCRNSNTVYCKLESCPSRAQGKLS</sequence>
<gene>
    <name type="primary">Spry1</name>
</gene>
<reference key="1">
    <citation type="journal article" date="1999" name="Development">
        <title>Vertebrate sprouty genes are induced by FGF signaling and can cause chondrodysplasia when overexpressed.</title>
        <authorList>
            <person name="Minowada G."/>
            <person name="Jarvis L.A."/>
            <person name="Chi C.L."/>
            <person name="Neubueser A."/>
            <person name="Sun X."/>
            <person name="Hacohen N."/>
            <person name="Krasnow M.A."/>
            <person name="Martin G.R."/>
        </authorList>
    </citation>
    <scope>NUCLEOTIDE SEQUENCE [MRNA]</scope>
    <scope>DEVELOPMENTAL STAGE</scope>
</reference>
<reference key="2">
    <citation type="journal article" date="2004" name="Genome Res.">
        <title>The status, quality, and expansion of the NIH full-length cDNA project: the Mammalian Gene Collection (MGC).</title>
        <authorList>
            <consortium name="The MGC Project Team"/>
        </authorList>
    </citation>
    <scope>NUCLEOTIDE SEQUENCE [LARGE SCALE MRNA]</scope>
    <source>
        <tissue>Limb</tissue>
        <tissue>Mammary gland</tissue>
    </source>
</reference>
<reference key="3">
    <citation type="journal article" date="2006" name="J. Biol. Chem.">
        <title>A functional interaction between sprouty proteins and caveolin-1.</title>
        <authorList>
            <person name="Cabrita M.A."/>
            <person name="Jaeggi F."/>
            <person name="Widjaja S.P."/>
            <person name="Christofori G."/>
        </authorList>
    </citation>
    <scope>SUBUNIT</scope>
    <scope>INTERACTION WITH CAV1 AND SPRY1</scope>
</reference>
<reference key="4">
    <citation type="journal article" date="2008" name="J. Biol. Chem.">
        <title>Tesk1 interacts with Spry2 to abrogate its inhibition of ERK phosphorylation downstream of receptor tyrosine kinase signaling.</title>
        <authorList>
            <person name="Chandramouli S."/>
            <person name="Yu C.Y."/>
            <person name="Yusoff P."/>
            <person name="Lao D.H."/>
            <person name="Leong H.F."/>
            <person name="Mizuno K."/>
            <person name="Guy G.R."/>
        </authorList>
    </citation>
    <scope>INTERACTION WITH TESK1</scope>
</reference>
<reference key="5">
    <citation type="journal article" date="2015" name="Exp. Eye Res.">
        <title>Negative regulation of TGFbeta-induced lens epithelial to mesenchymal transition (EMT) by RTK antagonists.</title>
        <authorList>
            <person name="Zhao G."/>
            <person name="Wojciechowski M.C."/>
            <person name="Jee S."/>
            <person name="Boros J."/>
            <person name="McAvoy J.W."/>
            <person name="Lovicu F.J."/>
        </authorList>
    </citation>
    <scope>FUNCTION</scope>
</reference>
<reference key="6">
    <citation type="journal article" date="2018" name="Exp. Eye Res.">
        <title>Negative regulation of lens fiber cell differentiation by RTK antagonists Spry and Spred.</title>
        <authorList>
            <person name="Zhao G."/>
            <person name="Bailey C.G."/>
            <person name="Feng Y."/>
            <person name="Rasko J."/>
            <person name="Lovicu F.J."/>
        </authorList>
    </citation>
    <scope>FUNCTION</scope>
</reference>
<feature type="chain" id="PRO_0000076899" description="Protein sprouty homolog 1">
    <location>
        <begin position="1"/>
        <end position="313"/>
    </location>
</feature>
<feature type="domain" description="SPR" evidence="2">
    <location>
        <begin position="177"/>
        <end position="289"/>
    </location>
</feature>
<feature type="region of interest" description="Disordered" evidence="3">
    <location>
        <begin position="43"/>
        <end position="152"/>
    </location>
</feature>
<feature type="compositionally biased region" description="Basic and acidic residues" evidence="3">
    <location>
        <begin position="69"/>
        <end position="79"/>
    </location>
</feature>
<feature type="compositionally biased region" description="Low complexity" evidence="3">
    <location>
        <begin position="106"/>
        <end position="125"/>
    </location>
</feature>
<feature type="modified residue" description="N-acetylmethionine" evidence="1">
    <location>
        <position position="1"/>
    </location>
</feature>
<accession>Q9QXV9</accession>
<keyword id="KW-0007">Acetylation</keyword>
<keyword id="KW-0963">Cytoplasm</keyword>
<keyword id="KW-0217">Developmental protein</keyword>
<keyword id="KW-0472">Membrane</keyword>
<keyword id="KW-1185">Reference proteome</keyword>